<sequence>MLKSVQGLWKDFFGIRDDGRKREYGSLDEVRKRSALRSRRKQMRPTGKSVLKRPRKVTDRKTEEKIRTNRRKTPKRRLTKIFQTIRDVFSNDNENMSKMQNVCGDMTRILKKRSQGRPSYMDTDTAKSRILRSDAFKRKISELKYNKQRISELRSGSSDGSSGKDRNQSLYLDREILLQRQIKKRDEKIKALESKLQSLQEALNYSNEKYRILEDLLDSSNIHPSYTKSRRTMSNLARENDEIKPLKIDLSPSPIRRTNSLFTSSPMKTYNRDGNIPEMQPLQENISPACPTPPYRSRETEKEDETLSPISVDFSSYLS</sequence>
<accession>P52919</accession>
<accession>D6VZ91</accession>
<feature type="chain" id="PRO_0000096745" description="NAP1-binding protein">
    <location>
        <begin position="1"/>
        <end position="319"/>
    </location>
</feature>
<feature type="region of interest" description="Disordered" evidence="1">
    <location>
        <begin position="34"/>
        <end position="74"/>
    </location>
</feature>
<feature type="region of interest" description="Disordered" evidence="1">
    <location>
        <begin position="278"/>
        <end position="319"/>
    </location>
</feature>
<feature type="compositionally biased region" description="Basic residues" evidence="1">
    <location>
        <begin position="34"/>
        <end position="43"/>
    </location>
</feature>
<feature type="compositionally biased region" description="Basic and acidic residues" evidence="1">
    <location>
        <begin position="56"/>
        <end position="67"/>
    </location>
</feature>
<feature type="modified residue" description="Phosphoserine" evidence="4">
    <location>
        <position position="251"/>
    </location>
</feature>
<feature type="modified residue" description="Phosphoserine" evidence="5">
    <location>
        <position position="260"/>
    </location>
</feature>
<keyword id="KW-0597">Phosphoprotein</keyword>
<keyword id="KW-1185">Reference proteome</keyword>
<comment type="subunit">
    <text evidence="3">Interacts with NDC1 and MPS2.</text>
</comment>
<comment type="interaction">
    <interactant intactId="EBI-11886">
        <id>P52919</id>
    </interactant>
    <interactant intactId="EBI-9166">
        <id>P40069</id>
        <label>KAP123</label>
    </interactant>
    <organismsDiffer>false</organismsDiffer>
    <experiments>6</experiments>
</comment>
<comment type="interaction">
    <interactant intactId="EBI-11886">
        <id>P52919</id>
    </interactant>
    <interactant intactId="EBI-23834">
        <id>P53159</id>
        <label>MPS2</label>
    </interactant>
    <organismsDiffer>false</organismsDiffer>
    <experiments>2</experiments>
</comment>
<comment type="miscellaneous">
    <text evidence="2">Present with 339 molecules/cell in log phase SD medium.</text>
</comment>
<protein>
    <recommendedName>
        <fullName>NAP1-binding protein</fullName>
    </recommendedName>
</protein>
<gene>
    <name type="primary">NBP1</name>
    <name type="ordered locus">YLR457C</name>
    <name type="ORF">L9122.6</name>
</gene>
<evidence type="ECO:0000256" key="1">
    <source>
        <dbReference type="SAM" id="MobiDB-lite"/>
    </source>
</evidence>
<evidence type="ECO:0000269" key="2">
    <source>
    </source>
</evidence>
<evidence type="ECO:0000269" key="3">
    <source>
    </source>
</evidence>
<evidence type="ECO:0007744" key="4">
    <source>
    </source>
</evidence>
<evidence type="ECO:0007744" key="5">
    <source>
    </source>
</evidence>
<organism>
    <name type="scientific">Saccharomyces cerevisiae (strain ATCC 204508 / S288c)</name>
    <name type="common">Baker's yeast</name>
    <dbReference type="NCBI Taxonomy" id="559292"/>
    <lineage>
        <taxon>Eukaryota</taxon>
        <taxon>Fungi</taxon>
        <taxon>Dikarya</taxon>
        <taxon>Ascomycota</taxon>
        <taxon>Saccharomycotina</taxon>
        <taxon>Saccharomycetes</taxon>
        <taxon>Saccharomycetales</taxon>
        <taxon>Saccharomycetaceae</taxon>
        <taxon>Saccharomyces</taxon>
    </lineage>
</organism>
<proteinExistence type="evidence at protein level"/>
<reference key="1">
    <citation type="submission" date="1994-11" db="EMBL/GenBank/DDBJ databases">
        <authorList>
            <person name="Okuda A."/>
            <person name="Fujii-Nakata T."/>
            <person name="Kikuchi A."/>
        </authorList>
    </citation>
    <scope>NUCLEOTIDE SEQUENCE [GENOMIC DNA]</scope>
    <source>
        <strain>SFY526</strain>
    </source>
</reference>
<reference key="2">
    <citation type="journal article" date="1997" name="Nature">
        <title>The nucleotide sequence of Saccharomyces cerevisiae chromosome XII.</title>
        <authorList>
            <person name="Johnston M."/>
            <person name="Hillier L.W."/>
            <person name="Riles L."/>
            <person name="Albermann K."/>
            <person name="Andre B."/>
            <person name="Ansorge W."/>
            <person name="Benes V."/>
            <person name="Brueckner M."/>
            <person name="Delius H."/>
            <person name="Dubois E."/>
            <person name="Duesterhoeft A."/>
            <person name="Entian K.-D."/>
            <person name="Floeth M."/>
            <person name="Goffeau A."/>
            <person name="Hebling U."/>
            <person name="Heumann K."/>
            <person name="Heuss-Neitzel D."/>
            <person name="Hilbert H."/>
            <person name="Hilger F."/>
            <person name="Kleine K."/>
            <person name="Koetter P."/>
            <person name="Louis E.J."/>
            <person name="Messenguy F."/>
            <person name="Mewes H.-W."/>
            <person name="Miosga T."/>
            <person name="Moestl D."/>
            <person name="Mueller-Auer S."/>
            <person name="Nentwich U."/>
            <person name="Obermaier B."/>
            <person name="Piravandi E."/>
            <person name="Pohl T.M."/>
            <person name="Portetelle D."/>
            <person name="Purnelle B."/>
            <person name="Rechmann S."/>
            <person name="Rieger M."/>
            <person name="Rinke M."/>
            <person name="Rose M."/>
            <person name="Scharfe M."/>
            <person name="Scherens B."/>
            <person name="Scholler P."/>
            <person name="Schwager C."/>
            <person name="Schwarz S."/>
            <person name="Underwood A.P."/>
            <person name="Urrestarazu L.A."/>
            <person name="Vandenbol M."/>
            <person name="Verhasselt P."/>
            <person name="Vierendeels F."/>
            <person name="Voet M."/>
            <person name="Volckaert G."/>
            <person name="Voss H."/>
            <person name="Wambutt R."/>
            <person name="Wedler E."/>
            <person name="Wedler H."/>
            <person name="Zimmermann F.K."/>
            <person name="Zollner A."/>
            <person name="Hani J."/>
            <person name="Hoheisel J.D."/>
        </authorList>
    </citation>
    <scope>NUCLEOTIDE SEQUENCE [LARGE SCALE GENOMIC DNA]</scope>
    <source>
        <strain>ATCC 204508 / S288c</strain>
    </source>
</reference>
<reference key="3">
    <citation type="journal article" date="2014" name="G3 (Bethesda)">
        <title>The reference genome sequence of Saccharomyces cerevisiae: Then and now.</title>
        <authorList>
            <person name="Engel S.R."/>
            <person name="Dietrich F.S."/>
            <person name="Fisk D.G."/>
            <person name="Binkley G."/>
            <person name="Balakrishnan R."/>
            <person name="Costanzo M.C."/>
            <person name="Dwight S.S."/>
            <person name="Hitz B.C."/>
            <person name="Karra K."/>
            <person name="Nash R.S."/>
            <person name="Weng S."/>
            <person name="Wong E.D."/>
            <person name="Lloyd P."/>
            <person name="Skrzypek M.S."/>
            <person name="Miyasato S.R."/>
            <person name="Simison M."/>
            <person name="Cherry J.M."/>
        </authorList>
    </citation>
    <scope>GENOME REANNOTATION</scope>
    <source>
        <strain>ATCC 204508 / S288c</strain>
    </source>
</reference>
<reference key="4">
    <citation type="journal article" date="2003" name="Nature">
        <title>Global analysis of protein expression in yeast.</title>
        <authorList>
            <person name="Ghaemmaghami S."/>
            <person name="Huh W.-K."/>
            <person name="Bower K."/>
            <person name="Howson R.W."/>
            <person name="Belle A."/>
            <person name="Dephoure N."/>
            <person name="O'Shea E.K."/>
            <person name="Weissman J.S."/>
        </authorList>
    </citation>
    <scope>LEVEL OF PROTEIN EXPRESSION [LARGE SCALE ANALYSIS]</scope>
</reference>
<reference key="5">
    <citation type="journal article" date="2006" name="Mol. Biol. Cell">
        <title>The Saccharomyces cerevisiae spindle pole body (SPB) component Nbp1p is required for SPB membrane insertion and interacts with the integral membrane proteins Ndc1p and Mps2p.</title>
        <authorList>
            <person name="Araki Y."/>
            <person name="Lau C.K."/>
            <person name="Maekawa H."/>
            <person name="Jaspersen S.L."/>
            <person name="Giddings T.H. Jr."/>
            <person name="Schiebel E."/>
            <person name="Winey M."/>
        </authorList>
    </citation>
    <scope>INTERACTION WITH NDC1 AND MPS2</scope>
</reference>
<reference key="6">
    <citation type="journal article" date="2007" name="Proc. Natl. Acad. Sci. U.S.A.">
        <title>Analysis of phosphorylation sites on proteins from Saccharomyces cerevisiae by electron transfer dissociation (ETD) mass spectrometry.</title>
        <authorList>
            <person name="Chi A."/>
            <person name="Huttenhower C."/>
            <person name="Geer L.Y."/>
            <person name="Coon J.J."/>
            <person name="Syka J.E.P."/>
            <person name="Bai D.L."/>
            <person name="Shabanowitz J."/>
            <person name="Burke D.J."/>
            <person name="Troyanskaya O.G."/>
            <person name="Hunt D.F."/>
        </authorList>
    </citation>
    <scope>IDENTIFICATION BY MASS SPECTROMETRY [LARGE SCALE ANALYSIS]</scope>
</reference>
<reference key="7">
    <citation type="journal article" date="2008" name="Mol. Cell. Proteomics">
        <title>A multidimensional chromatography technology for in-depth phosphoproteome analysis.</title>
        <authorList>
            <person name="Albuquerque C.P."/>
            <person name="Smolka M.B."/>
            <person name="Payne S.H."/>
            <person name="Bafna V."/>
            <person name="Eng J."/>
            <person name="Zhou H."/>
        </authorList>
    </citation>
    <scope>PHOSPHORYLATION [LARGE SCALE ANALYSIS] AT SER-251</scope>
    <scope>IDENTIFICATION BY MASS SPECTROMETRY [LARGE SCALE ANALYSIS]</scope>
</reference>
<reference key="8">
    <citation type="journal article" date="2009" name="Science">
        <title>Global analysis of Cdk1 substrate phosphorylation sites provides insights into evolution.</title>
        <authorList>
            <person name="Holt L.J."/>
            <person name="Tuch B.B."/>
            <person name="Villen J."/>
            <person name="Johnson A.D."/>
            <person name="Gygi S.P."/>
            <person name="Morgan D.O."/>
        </authorList>
    </citation>
    <scope>PHOSPHORYLATION [LARGE SCALE ANALYSIS] AT SER-260</scope>
    <scope>IDENTIFICATION BY MASS SPECTROMETRY [LARGE SCALE ANALYSIS]</scope>
</reference>
<dbReference type="EMBL" id="D43632">
    <property type="protein sequence ID" value="BAA07740.1"/>
    <property type="molecule type" value="Genomic_DNA"/>
</dbReference>
<dbReference type="EMBL" id="U22383">
    <property type="protein sequence ID" value="AAB64721.1"/>
    <property type="molecule type" value="Genomic_DNA"/>
</dbReference>
<dbReference type="EMBL" id="BK006945">
    <property type="protein sequence ID" value="DAA09757.1"/>
    <property type="molecule type" value="Genomic_DNA"/>
</dbReference>
<dbReference type="PIR" id="S59416">
    <property type="entry name" value="S59416"/>
</dbReference>
<dbReference type="RefSeq" id="NP_013562.3">
    <property type="nucleotide sequence ID" value="NM_001182345.3"/>
</dbReference>
<dbReference type="SMR" id="P52919"/>
<dbReference type="BioGRID" id="31716">
    <property type="interactions" value="98"/>
</dbReference>
<dbReference type="DIP" id="DIP-3852N"/>
<dbReference type="FunCoup" id="P52919">
    <property type="interactions" value="121"/>
</dbReference>
<dbReference type="IntAct" id="P52919">
    <property type="interactions" value="19"/>
</dbReference>
<dbReference type="MINT" id="P52919"/>
<dbReference type="STRING" id="4932.YLR457C"/>
<dbReference type="GlyGen" id="P52919">
    <property type="glycosylation" value="4 sites, 1 O-linked glycan (3 sites)"/>
</dbReference>
<dbReference type="iPTMnet" id="P52919"/>
<dbReference type="PaxDb" id="4932-YLR457C"/>
<dbReference type="PeptideAtlas" id="P52919"/>
<dbReference type="EnsemblFungi" id="YLR457C_mRNA">
    <property type="protein sequence ID" value="YLR457C"/>
    <property type="gene ID" value="YLR457C"/>
</dbReference>
<dbReference type="GeneID" id="851180"/>
<dbReference type="KEGG" id="sce:YLR457C"/>
<dbReference type="AGR" id="SGD:S000004449"/>
<dbReference type="SGD" id="S000004449">
    <property type="gene designation" value="NBP1"/>
</dbReference>
<dbReference type="VEuPathDB" id="FungiDB:YLR457C"/>
<dbReference type="eggNOG" id="ENOG502RYR8">
    <property type="taxonomic scope" value="Eukaryota"/>
</dbReference>
<dbReference type="GeneTree" id="ENSGT00940000176561"/>
<dbReference type="HOGENOM" id="CLU_071874_1_0_1"/>
<dbReference type="InParanoid" id="P52919"/>
<dbReference type="OMA" id="NDNENMS"/>
<dbReference type="OrthoDB" id="4053251at2759"/>
<dbReference type="BioCyc" id="YEAST:G3O-32510-MONOMER"/>
<dbReference type="BioGRID-ORCS" id="851180">
    <property type="hits" value="7 hits in 10 CRISPR screens"/>
</dbReference>
<dbReference type="CD-CODE" id="876000F7">
    <property type="entry name" value="Centrosome"/>
</dbReference>
<dbReference type="PRO" id="PR:P52919"/>
<dbReference type="Proteomes" id="UP000002311">
    <property type="component" value="Chromosome XII"/>
</dbReference>
<dbReference type="RNAct" id="P52919">
    <property type="molecule type" value="protein"/>
</dbReference>
<dbReference type="GO" id="GO:0005823">
    <property type="term" value="C:central plaque of spindle pole body"/>
    <property type="evidence" value="ECO:0000314"/>
    <property type="project" value="SGD"/>
</dbReference>
<dbReference type="GO" id="GO:0005637">
    <property type="term" value="C:nuclear inner membrane"/>
    <property type="evidence" value="ECO:0000314"/>
    <property type="project" value="SGD"/>
</dbReference>
<dbReference type="GO" id="GO:0005816">
    <property type="term" value="C:spindle pole body"/>
    <property type="evidence" value="ECO:0000314"/>
    <property type="project" value="SGD"/>
</dbReference>
<dbReference type="GO" id="GO:0008289">
    <property type="term" value="F:lipid binding"/>
    <property type="evidence" value="ECO:0000314"/>
    <property type="project" value="SGD"/>
</dbReference>
<dbReference type="GO" id="GO:0030474">
    <property type="term" value="P:spindle pole body duplication"/>
    <property type="evidence" value="ECO:0000315"/>
    <property type="project" value="SGD"/>
</dbReference>
<dbReference type="GO" id="GO:0070631">
    <property type="term" value="P:spindle pole body localization"/>
    <property type="evidence" value="ECO:0000315"/>
    <property type="project" value="SGD"/>
</dbReference>
<dbReference type="InterPro" id="IPR013743">
    <property type="entry name" value="NBP1/CSA1"/>
</dbReference>
<dbReference type="Pfam" id="PF08537">
    <property type="entry name" value="NBP1"/>
    <property type="match status" value="1"/>
</dbReference>
<name>NBP1_YEAST</name>